<sequence length="245" mass="27626">MNGRADFREPNAEVPRPIPHIGPDYIPTEEERRVFAECNDESFWFRSVPLAATSMLITQGLISKGILSSHPKYGSIPKLILACIMGYFAGKLSYVKTCQEKFKKLENSPLGEALRSGQARRSSPPGHYYQKSKYDSSVSGQSSFVTSPAADNIEMLPHYEPIPFSSSMNESAPTGITDHIVQGPDPNLEESPKRKNITYEELRNKNRESYEVSLTQKTDPSVRPMHERVPKKEVKVNKYGDTWDE</sequence>
<proteinExistence type="evidence at protein level"/>
<reference key="1">
    <citation type="journal article" date="2001" name="Biochem. Biophys. Res. Commun.">
        <title>Molecular cloning of a novel human gene on chromosome 4p11 by immunoscreening of an ovarian carcinoma cDNA library.</title>
        <authorList>
            <person name="Luo L.Y."/>
            <person name="Soosaipillai A."/>
            <person name="Diamandis E.P."/>
        </authorList>
    </citation>
    <scope>NUCLEOTIDE SEQUENCE [MRNA] (ISOFORMS 1 AND 2)</scope>
    <scope>TISSUE SPECIFICITY</scope>
    <source>
        <tissue>Ovarian carcinoma</tissue>
    </source>
</reference>
<reference key="2">
    <citation type="submission" date="2000-05" db="EMBL/GenBank/DDBJ databases">
        <authorList>
            <person name="Xu X."/>
            <person name="Yang Y."/>
            <person name="Gao G."/>
            <person name="Xiao H."/>
            <person name="Chen Z."/>
            <person name="Han Z."/>
        </authorList>
    </citation>
    <scope>NUCLEOTIDE SEQUENCE [LARGE SCALE MRNA] (ISOFORM 1)</scope>
    <source>
        <tissue>Pituitary tumor</tissue>
    </source>
</reference>
<reference key="3">
    <citation type="submission" date="2003-04" db="EMBL/GenBank/DDBJ databases">
        <title>Full-length cDNA libraries and normalization.</title>
        <authorList>
            <person name="Li W.B."/>
            <person name="Gruber C."/>
            <person name="Jessee J."/>
            <person name="Polayes D."/>
        </authorList>
    </citation>
    <scope>NUCLEOTIDE SEQUENCE [LARGE SCALE MRNA] (ISOFORM 4)</scope>
    <source>
        <tissue>Fetal brain</tissue>
    </source>
</reference>
<reference key="4">
    <citation type="journal article" date="2004" name="Nat. Genet.">
        <title>Complete sequencing and characterization of 21,243 full-length human cDNAs.</title>
        <authorList>
            <person name="Ota T."/>
            <person name="Suzuki Y."/>
            <person name="Nishikawa T."/>
            <person name="Otsuki T."/>
            <person name="Sugiyama T."/>
            <person name="Irie R."/>
            <person name="Wakamatsu A."/>
            <person name="Hayashi K."/>
            <person name="Sato H."/>
            <person name="Nagai K."/>
            <person name="Kimura K."/>
            <person name="Makita H."/>
            <person name="Sekine M."/>
            <person name="Obayashi M."/>
            <person name="Nishi T."/>
            <person name="Shibahara T."/>
            <person name="Tanaka T."/>
            <person name="Ishii S."/>
            <person name="Yamamoto J."/>
            <person name="Saito K."/>
            <person name="Kawai Y."/>
            <person name="Isono Y."/>
            <person name="Nakamura Y."/>
            <person name="Nagahari K."/>
            <person name="Murakami K."/>
            <person name="Yasuda T."/>
            <person name="Iwayanagi T."/>
            <person name="Wagatsuma M."/>
            <person name="Shiratori A."/>
            <person name="Sudo H."/>
            <person name="Hosoiri T."/>
            <person name="Kaku Y."/>
            <person name="Kodaira H."/>
            <person name="Kondo H."/>
            <person name="Sugawara M."/>
            <person name="Takahashi M."/>
            <person name="Kanda K."/>
            <person name="Yokoi T."/>
            <person name="Furuya T."/>
            <person name="Kikkawa E."/>
            <person name="Omura Y."/>
            <person name="Abe K."/>
            <person name="Kamihara K."/>
            <person name="Katsuta N."/>
            <person name="Sato K."/>
            <person name="Tanikawa M."/>
            <person name="Yamazaki M."/>
            <person name="Ninomiya K."/>
            <person name="Ishibashi T."/>
            <person name="Yamashita H."/>
            <person name="Murakawa K."/>
            <person name="Fujimori K."/>
            <person name="Tanai H."/>
            <person name="Kimata M."/>
            <person name="Watanabe M."/>
            <person name="Hiraoka S."/>
            <person name="Chiba Y."/>
            <person name="Ishida S."/>
            <person name="Ono Y."/>
            <person name="Takiguchi S."/>
            <person name="Watanabe S."/>
            <person name="Yosida M."/>
            <person name="Hotuta T."/>
            <person name="Kusano J."/>
            <person name="Kanehori K."/>
            <person name="Takahashi-Fujii A."/>
            <person name="Hara H."/>
            <person name="Tanase T.-O."/>
            <person name="Nomura Y."/>
            <person name="Togiya S."/>
            <person name="Komai F."/>
            <person name="Hara R."/>
            <person name="Takeuchi K."/>
            <person name="Arita M."/>
            <person name="Imose N."/>
            <person name="Musashino K."/>
            <person name="Yuuki H."/>
            <person name="Oshima A."/>
            <person name="Sasaki N."/>
            <person name="Aotsuka S."/>
            <person name="Yoshikawa Y."/>
            <person name="Matsunawa H."/>
            <person name="Ichihara T."/>
            <person name="Shiohata N."/>
            <person name="Sano S."/>
            <person name="Moriya S."/>
            <person name="Momiyama H."/>
            <person name="Satoh N."/>
            <person name="Takami S."/>
            <person name="Terashima Y."/>
            <person name="Suzuki O."/>
            <person name="Nakagawa S."/>
            <person name="Senoh A."/>
            <person name="Mizoguchi H."/>
            <person name="Goto Y."/>
            <person name="Shimizu F."/>
            <person name="Wakebe H."/>
            <person name="Hishigaki H."/>
            <person name="Watanabe T."/>
            <person name="Sugiyama A."/>
            <person name="Takemoto M."/>
            <person name="Kawakami B."/>
            <person name="Yamazaki M."/>
            <person name="Watanabe K."/>
            <person name="Kumagai A."/>
            <person name="Itakura S."/>
            <person name="Fukuzumi Y."/>
            <person name="Fujimori Y."/>
            <person name="Komiyama M."/>
            <person name="Tashiro H."/>
            <person name="Tanigami A."/>
            <person name="Fujiwara T."/>
            <person name="Ono T."/>
            <person name="Yamada K."/>
            <person name="Fujii Y."/>
            <person name="Ozaki K."/>
            <person name="Hirao M."/>
            <person name="Ohmori Y."/>
            <person name="Kawabata A."/>
            <person name="Hikiji T."/>
            <person name="Kobatake N."/>
            <person name="Inagaki H."/>
            <person name="Ikema Y."/>
            <person name="Okamoto S."/>
            <person name="Okitani R."/>
            <person name="Kawakami T."/>
            <person name="Noguchi S."/>
            <person name="Itoh T."/>
            <person name="Shigeta K."/>
            <person name="Senba T."/>
            <person name="Matsumura K."/>
            <person name="Nakajima Y."/>
            <person name="Mizuno T."/>
            <person name="Morinaga M."/>
            <person name="Sasaki M."/>
            <person name="Togashi T."/>
            <person name="Oyama M."/>
            <person name="Hata H."/>
            <person name="Watanabe M."/>
            <person name="Komatsu T."/>
            <person name="Mizushima-Sugano J."/>
            <person name="Satoh T."/>
            <person name="Shirai Y."/>
            <person name="Takahashi Y."/>
            <person name="Nakagawa K."/>
            <person name="Okumura K."/>
            <person name="Nagase T."/>
            <person name="Nomura N."/>
            <person name="Kikuchi H."/>
            <person name="Masuho Y."/>
            <person name="Yamashita R."/>
            <person name="Nakai K."/>
            <person name="Yada T."/>
            <person name="Nakamura Y."/>
            <person name="Ohara O."/>
            <person name="Isogai T."/>
            <person name="Sugano S."/>
        </authorList>
    </citation>
    <scope>NUCLEOTIDE SEQUENCE [LARGE SCALE MRNA] (ISOFORM 1)</scope>
</reference>
<reference key="5">
    <citation type="journal article" date="2005" name="Nature">
        <title>Generation and annotation of the DNA sequences of human chromosomes 2 and 4.</title>
        <authorList>
            <person name="Hillier L.W."/>
            <person name="Graves T.A."/>
            <person name="Fulton R.S."/>
            <person name="Fulton L.A."/>
            <person name="Pepin K.H."/>
            <person name="Minx P."/>
            <person name="Wagner-McPherson C."/>
            <person name="Layman D."/>
            <person name="Wylie K."/>
            <person name="Sekhon M."/>
            <person name="Becker M.C."/>
            <person name="Fewell G.A."/>
            <person name="Delehaunty K.D."/>
            <person name="Miner T.L."/>
            <person name="Nash W.E."/>
            <person name="Kremitzki C."/>
            <person name="Oddy L."/>
            <person name="Du H."/>
            <person name="Sun H."/>
            <person name="Bradshaw-Cordum H."/>
            <person name="Ali J."/>
            <person name="Carter J."/>
            <person name="Cordes M."/>
            <person name="Harris A."/>
            <person name="Isak A."/>
            <person name="van Brunt A."/>
            <person name="Nguyen C."/>
            <person name="Du F."/>
            <person name="Courtney L."/>
            <person name="Kalicki J."/>
            <person name="Ozersky P."/>
            <person name="Abbott S."/>
            <person name="Armstrong J."/>
            <person name="Belter E.A."/>
            <person name="Caruso L."/>
            <person name="Cedroni M."/>
            <person name="Cotton M."/>
            <person name="Davidson T."/>
            <person name="Desai A."/>
            <person name="Elliott G."/>
            <person name="Erb T."/>
            <person name="Fronick C."/>
            <person name="Gaige T."/>
            <person name="Haakenson W."/>
            <person name="Haglund K."/>
            <person name="Holmes A."/>
            <person name="Harkins R."/>
            <person name="Kim K."/>
            <person name="Kruchowski S.S."/>
            <person name="Strong C.M."/>
            <person name="Grewal N."/>
            <person name="Goyea E."/>
            <person name="Hou S."/>
            <person name="Levy A."/>
            <person name="Martinka S."/>
            <person name="Mead K."/>
            <person name="McLellan M.D."/>
            <person name="Meyer R."/>
            <person name="Randall-Maher J."/>
            <person name="Tomlinson C."/>
            <person name="Dauphin-Kohlberg S."/>
            <person name="Kozlowicz-Reilly A."/>
            <person name="Shah N."/>
            <person name="Swearengen-Shahid S."/>
            <person name="Snider J."/>
            <person name="Strong J.T."/>
            <person name="Thompson J."/>
            <person name="Yoakum M."/>
            <person name="Leonard S."/>
            <person name="Pearman C."/>
            <person name="Trani L."/>
            <person name="Radionenko M."/>
            <person name="Waligorski J.E."/>
            <person name="Wang C."/>
            <person name="Rock S.M."/>
            <person name="Tin-Wollam A.-M."/>
            <person name="Maupin R."/>
            <person name="Latreille P."/>
            <person name="Wendl M.C."/>
            <person name="Yang S.-P."/>
            <person name="Pohl C."/>
            <person name="Wallis J.W."/>
            <person name="Spieth J."/>
            <person name="Bieri T.A."/>
            <person name="Berkowicz N."/>
            <person name="Nelson J.O."/>
            <person name="Osborne J."/>
            <person name="Ding L."/>
            <person name="Meyer R."/>
            <person name="Sabo A."/>
            <person name="Shotland Y."/>
            <person name="Sinha P."/>
            <person name="Wohldmann P.E."/>
            <person name="Cook L.L."/>
            <person name="Hickenbotham M.T."/>
            <person name="Eldred J."/>
            <person name="Williams D."/>
            <person name="Jones T.A."/>
            <person name="She X."/>
            <person name="Ciccarelli F.D."/>
            <person name="Izaurralde E."/>
            <person name="Taylor J."/>
            <person name="Schmutz J."/>
            <person name="Myers R.M."/>
            <person name="Cox D.R."/>
            <person name="Huang X."/>
            <person name="McPherson J.D."/>
            <person name="Mardis E.R."/>
            <person name="Clifton S.W."/>
            <person name="Warren W.C."/>
            <person name="Chinwalla A.T."/>
            <person name="Eddy S.R."/>
            <person name="Marra M.A."/>
            <person name="Ovcharenko I."/>
            <person name="Furey T.S."/>
            <person name="Miller W."/>
            <person name="Eichler E.E."/>
            <person name="Bork P."/>
            <person name="Suyama M."/>
            <person name="Torrents D."/>
            <person name="Waterston R.H."/>
            <person name="Wilson R.K."/>
        </authorList>
    </citation>
    <scope>NUCLEOTIDE SEQUENCE [LARGE SCALE GENOMIC DNA]</scope>
</reference>
<reference key="6">
    <citation type="submission" date="2005-07" db="EMBL/GenBank/DDBJ databases">
        <authorList>
            <person name="Mural R.J."/>
            <person name="Istrail S."/>
            <person name="Sutton G.G."/>
            <person name="Florea L."/>
            <person name="Halpern A.L."/>
            <person name="Mobarry C.M."/>
            <person name="Lippert R."/>
            <person name="Walenz B."/>
            <person name="Shatkay H."/>
            <person name="Dew I."/>
            <person name="Miller J.R."/>
            <person name="Flanigan M.J."/>
            <person name="Edwards N.J."/>
            <person name="Bolanos R."/>
            <person name="Fasulo D."/>
            <person name="Halldorsson B.V."/>
            <person name="Hannenhalli S."/>
            <person name="Turner R."/>
            <person name="Yooseph S."/>
            <person name="Lu F."/>
            <person name="Nusskern D.R."/>
            <person name="Shue B.C."/>
            <person name="Zheng X.H."/>
            <person name="Zhong F."/>
            <person name="Delcher A.L."/>
            <person name="Huson D.H."/>
            <person name="Kravitz S.A."/>
            <person name="Mouchard L."/>
            <person name="Reinert K."/>
            <person name="Remington K.A."/>
            <person name="Clark A.G."/>
            <person name="Waterman M.S."/>
            <person name="Eichler E.E."/>
            <person name="Adams M.D."/>
            <person name="Hunkapiller M.W."/>
            <person name="Myers E.W."/>
            <person name="Venter J.C."/>
        </authorList>
    </citation>
    <scope>NUCLEOTIDE SEQUENCE [LARGE SCALE GENOMIC DNA]</scope>
</reference>
<reference key="7">
    <citation type="journal article" date="2004" name="Genome Res.">
        <title>The status, quality, and expansion of the NIH full-length cDNA project: the Mammalian Gene Collection (MGC).</title>
        <authorList>
            <consortium name="The MGC Project Team"/>
        </authorList>
    </citation>
    <scope>NUCLEOTIDE SEQUENCE [LARGE SCALE MRNA] (ISOFORM 1)</scope>
</reference>
<reference key="8">
    <citation type="journal article" date="2006" name="Cell">
        <title>Global, in vivo, and site-specific phosphorylation dynamics in signaling networks.</title>
        <authorList>
            <person name="Olsen J.V."/>
            <person name="Blagoev B."/>
            <person name="Gnad F."/>
            <person name="Macek B."/>
            <person name="Kumar C."/>
            <person name="Mortensen P."/>
            <person name="Mann M."/>
        </authorList>
    </citation>
    <scope>PHOSPHORYLATION [LARGE SCALE ANALYSIS] AT SER-108 AND SER-191</scope>
    <scope>IDENTIFICATION BY MASS SPECTROMETRY [LARGE SCALE ANALYSIS]</scope>
    <source>
        <tissue>Cervix carcinoma</tissue>
    </source>
</reference>
<reference key="9">
    <citation type="journal article" date="2008" name="Mol. Cell">
        <title>Kinase-selective enrichment enables quantitative phosphoproteomics of the kinome across the cell cycle.</title>
        <authorList>
            <person name="Daub H."/>
            <person name="Olsen J.V."/>
            <person name="Bairlein M."/>
            <person name="Gnad F."/>
            <person name="Oppermann F.S."/>
            <person name="Korner R."/>
            <person name="Greff Z."/>
            <person name="Keri G."/>
            <person name="Stemmann O."/>
            <person name="Mann M."/>
        </authorList>
    </citation>
    <scope>PHOSPHORYLATION [LARGE SCALE ANALYSIS] AT SER-108</scope>
    <scope>IDENTIFICATION BY MASS SPECTROMETRY [LARGE SCALE ANALYSIS]</scope>
    <source>
        <tissue>Cervix carcinoma</tissue>
    </source>
</reference>
<reference key="10">
    <citation type="journal article" date="2008" name="Proc. Natl. Acad. Sci. U.S.A.">
        <title>A quantitative atlas of mitotic phosphorylation.</title>
        <authorList>
            <person name="Dephoure N."/>
            <person name="Zhou C."/>
            <person name="Villen J."/>
            <person name="Beausoleil S.A."/>
            <person name="Bakalarski C.E."/>
            <person name="Elledge S.J."/>
            <person name="Gygi S.P."/>
        </authorList>
    </citation>
    <scope>IDENTIFICATION BY MASS SPECTROMETRY [LARGE SCALE ANALYSIS]</scope>
    <source>
        <tissue>Cervix carcinoma</tissue>
    </source>
</reference>
<reference key="11">
    <citation type="journal article" date="2009" name="Sci. Signal.">
        <title>Quantitative phosphoproteomic analysis of T cell receptor signaling reveals system-wide modulation of protein-protein interactions.</title>
        <authorList>
            <person name="Mayya V."/>
            <person name="Lundgren D.H."/>
            <person name="Hwang S.-I."/>
            <person name="Rezaul K."/>
            <person name="Wu L."/>
            <person name="Eng J.K."/>
            <person name="Rodionov V."/>
            <person name="Han D.K."/>
        </authorList>
    </citation>
    <scope>PHOSPHORYLATION [LARGE SCALE ANALYSIS] AT SER-108</scope>
    <scope>IDENTIFICATION BY MASS SPECTROMETRY [LARGE SCALE ANALYSIS]</scope>
    <source>
        <tissue>Leukemic T-cell</tissue>
    </source>
</reference>
<reference key="12">
    <citation type="journal article" date="2009" name="Science">
        <title>Lysine acetylation targets protein complexes and co-regulates major cellular functions.</title>
        <authorList>
            <person name="Choudhary C."/>
            <person name="Kumar C."/>
            <person name="Gnad F."/>
            <person name="Nielsen M.L."/>
            <person name="Rehman M."/>
            <person name="Walther T.C."/>
            <person name="Olsen J.V."/>
            <person name="Mann M."/>
        </authorList>
    </citation>
    <scope>IDENTIFICATION BY MASS SPECTROMETRY [LARGE SCALE ANALYSIS]</scope>
</reference>
<reference key="13">
    <citation type="journal article" date="2010" name="Mol. Cancer Ther.">
        <title>Role of the 18:1 lysophosphatidic acid-ovarian cancer immunoreactive antigen domain containing 1 (OCIAD1)-integrin axis in generating late-stage ovarian cancer.</title>
        <authorList>
            <person name="Wang C."/>
            <person name="Michener C.M."/>
            <person name="Belinson J.L."/>
            <person name="Vaziri S."/>
            <person name="Ganapathi R."/>
            <person name="Sengupta S."/>
        </authorList>
    </citation>
    <scope>FUNCTION</scope>
</reference>
<reference key="14">
    <citation type="journal article" date="2010" name="Sci. Signal.">
        <title>Quantitative phosphoproteomics reveals widespread full phosphorylation site occupancy during mitosis.</title>
        <authorList>
            <person name="Olsen J.V."/>
            <person name="Vermeulen M."/>
            <person name="Santamaria A."/>
            <person name="Kumar C."/>
            <person name="Miller M.L."/>
            <person name="Jensen L.J."/>
            <person name="Gnad F."/>
            <person name="Cox J."/>
            <person name="Jensen T.S."/>
            <person name="Nigg E.A."/>
            <person name="Brunak S."/>
            <person name="Mann M."/>
        </authorList>
    </citation>
    <scope>PHOSPHORYLATION [LARGE SCALE ANALYSIS] AT SER-108</scope>
    <scope>IDENTIFICATION BY MASS SPECTROMETRY [LARGE SCALE ANALYSIS]</scope>
    <source>
        <tissue>Cervix carcinoma</tissue>
    </source>
</reference>
<reference key="15">
    <citation type="journal article" date="2011" name="BMC Syst. Biol.">
        <title>Initial characterization of the human central proteome.</title>
        <authorList>
            <person name="Burkard T.R."/>
            <person name="Planyavsky M."/>
            <person name="Kaupe I."/>
            <person name="Breitwieser F.P."/>
            <person name="Buerckstuemmer T."/>
            <person name="Bennett K.L."/>
            <person name="Superti-Furga G."/>
            <person name="Colinge J."/>
        </authorList>
    </citation>
    <scope>IDENTIFICATION BY MASS SPECTROMETRY [LARGE SCALE ANALYSIS]</scope>
</reference>
<reference key="16">
    <citation type="journal article" date="2011" name="Sci. Signal.">
        <title>System-wide temporal characterization of the proteome and phosphoproteome of human embryonic stem cell differentiation.</title>
        <authorList>
            <person name="Rigbolt K.T."/>
            <person name="Prokhorova T.A."/>
            <person name="Akimov V."/>
            <person name="Henningsen J."/>
            <person name="Johansen P.T."/>
            <person name="Kratchmarova I."/>
            <person name="Kassem M."/>
            <person name="Mann M."/>
            <person name="Olsen J.V."/>
            <person name="Blagoev B."/>
        </authorList>
    </citation>
    <scope>PHOSPHORYLATION [LARGE SCALE ANALYSIS] AT SER-108; SER-123 AND SER-191</scope>
    <scope>IDENTIFICATION BY MASS SPECTROMETRY [LARGE SCALE ANALYSIS]</scope>
</reference>
<reference key="17">
    <citation type="journal article" date="2013" name="J. Proteome Res.">
        <title>Toward a comprehensive characterization of a human cancer cell phosphoproteome.</title>
        <authorList>
            <person name="Zhou H."/>
            <person name="Di Palma S."/>
            <person name="Preisinger C."/>
            <person name="Peng M."/>
            <person name="Polat A.N."/>
            <person name="Heck A.J."/>
            <person name="Mohammed S."/>
        </authorList>
    </citation>
    <scope>PHOSPHORYLATION [LARGE SCALE ANALYSIS] AT SER-108; SER-116 AND SER-123</scope>
    <scope>IDENTIFICATION BY MASS SPECTROMETRY [LARGE SCALE ANALYSIS]</scope>
    <source>
        <tissue>Cervix carcinoma</tissue>
        <tissue>Erythroleukemia</tissue>
    </source>
</reference>
<reference key="18">
    <citation type="journal article" date="2014" name="J. Proteomics">
        <title>An enzyme assisted RP-RPLC approach for in-depth analysis of human liver phosphoproteome.</title>
        <authorList>
            <person name="Bian Y."/>
            <person name="Song C."/>
            <person name="Cheng K."/>
            <person name="Dong M."/>
            <person name="Wang F."/>
            <person name="Huang J."/>
            <person name="Sun D."/>
            <person name="Wang L."/>
            <person name="Ye M."/>
            <person name="Zou H."/>
        </authorList>
    </citation>
    <scope>PHOSPHORYLATION [LARGE SCALE ANALYSIS] AT SER-123 AND SER-191</scope>
    <scope>IDENTIFICATION BY MASS SPECTROMETRY [LARGE SCALE ANALYSIS]</scope>
    <source>
        <tissue>Liver</tissue>
    </source>
</reference>
<reference key="19">
    <citation type="journal article" date="2015" name="Proteomics">
        <title>N-terminome analysis of the human mitochondrial proteome.</title>
        <authorList>
            <person name="Vaca Jacome A.S."/>
            <person name="Rabilloud T."/>
            <person name="Schaeffer-Reiss C."/>
            <person name="Rompais M."/>
            <person name="Ayoub D."/>
            <person name="Lane L."/>
            <person name="Bairoch A."/>
            <person name="Van Dorsselaer A."/>
            <person name="Carapito C."/>
        </authorList>
    </citation>
    <scope>IDENTIFICATION BY MASS SPECTROMETRY [LARGE SCALE ANALYSIS]</scope>
</reference>
<reference key="20">
    <citation type="journal article" date="2018" name="Sci. Rep.">
        <title>A double helical motif in OCIAD2 is essential for its localization, interactions and STAT3 activation.</title>
        <authorList>
            <person name="Sinha S."/>
            <person name="Bheemsetty V.A."/>
            <person name="Inamdar M.S."/>
        </authorList>
    </citation>
    <scope>INTERACTION WITH OCIAD2</scope>
</reference>
<keyword id="KW-0025">Alternative splicing</keyword>
<keyword id="KW-0967">Endosome</keyword>
<keyword id="KW-0597">Phosphoprotein</keyword>
<keyword id="KW-1267">Proteomics identification</keyword>
<keyword id="KW-1185">Reference proteome</keyword>
<dbReference type="EMBL" id="AF323665">
    <property type="protein sequence ID" value="AAG45220.1"/>
    <property type="molecule type" value="mRNA"/>
</dbReference>
<dbReference type="EMBL" id="AF324350">
    <property type="protein sequence ID" value="AAK12121.1"/>
    <property type="molecule type" value="mRNA"/>
</dbReference>
<dbReference type="EMBL" id="AF251296">
    <property type="protein sequence ID" value="AAG44596.1"/>
    <property type="molecule type" value="mRNA"/>
</dbReference>
<dbReference type="EMBL" id="AL539411">
    <property type="status" value="NOT_ANNOTATED_CDS"/>
    <property type="molecule type" value="mRNA"/>
</dbReference>
<dbReference type="EMBL" id="AK000462">
    <property type="protein sequence ID" value="BAA91181.1"/>
    <property type="molecule type" value="mRNA"/>
</dbReference>
<dbReference type="EMBL" id="AC079927">
    <property type="status" value="NOT_ANNOTATED_CDS"/>
    <property type="molecule type" value="Genomic_DNA"/>
</dbReference>
<dbReference type="EMBL" id="CH471069">
    <property type="protein sequence ID" value="EAW93070.1"/>
    <property type="molecule type" value="Genomic_DNA"/>
</dbReference>
<dbReference type="EMBL" id="BC003409">
    <property type="protein sequence ID" value="AAH03409.1"/>
    <property type="molecule type" value="mRNA"/>
</dbReference>
<dbReference type="EMBL" id="BC088361">
    <property type="protein sequence ID" value="AAH88361.1"/>
    <property type="molecule type" value="mRNA"/>
</dbReference>
<dbReference type="CCDS" id="CCDS3484.1">
    <molecule id="Q9NX40-1"/>
</dbReference>
<dbReference type="CCDS" id="CCDS43228.1">
    <molecule id="Q9NX40-2"/>
</dbReference>
<dbReference type="CCDS" id="CCDS47052.1">
    <molecule id="Q9NX40-4"/>
</dbReference>
<dbReference type="PIR" id="JC7586">
    <property type="entry name" value="JC7586"/>
</dbReference>
<dbReference type="RefSeq" id="NP_001073308.1">
    <molecule id="Q9NX40-1"/>
    <property type="nucleotide sequence ID" value="NM_001079839.3"/>
</dbReference>
<dbReference type="RefSeq" id="NP_001073309.1">
    <molecule id="Q9NX40-4"/>
    <property type="nucleotide sequence ID" value="NM_001079840.3"/>
</dbReference>
<dbReference type="RefSeq" id="NP_001073310.1">
    <molecule id="Q9NX40-2"/>
    <property type="nucleotide sequence ID" value="NM_001079841.3"/>
</dbReference>
<dbReference type="RefSeq" id="NP_001073311.2">
    <molecule id="Q9NX40-4"/>
    <property type="nucleotide sequence ID" value="NM_001079842.3"/>
</dbReference>
<dbReference type="RefSeq" id="NP_060300.1">
    <molecule id="Q9NX40-1"/>
    <property type="nucleotide sequence ID" value="NM_017830.4"/>
</dbReference>
<dbReference type="RefSeq" id="XP_016863818.1">
    <property type="nucleotide sequence ID" value="XM_017008329.1"/>
</dbReference>
<dbReference type="RefSeq" id="XP_024309874.1">
    <molecule id="Q9NX40-1"/>
    <property type="nucleotide sequence ID" value="XM_024454106.2"/>
</dbReference>
<dbReference type="RefSeq" id="XP_024309875.1">
    <molecule id="Q9NX40-1"/>
    <property type="nucleotide sequence ID" value="XM_024454107.2"/>
</dbReference>
<dbReference type="RefSeq" id="XP_024309876.1">
    <molecule id="Q9NX40-1"/>
    <property type="nucleotide sequence ID" value="XM_024454108.2"/>
</dbReference>
<dbReference type="RefSeq" id="XP_024309879.1">
    <molecule id="Q9NX40-4"/>
    <property type="nucleotide sequence ID" value="XM_024454111.2"/>
</dbReference>
<dbReference type="RefSeq" id="XP_024309880.1">
    <molecule id="Q9NX40-4"/>
    <property type="nucleotide sequence ID" value="XM_024454112.2"/>
</dbReference>
<dbReference type="RefSeq" id="XP_047271818.1">
    <molecule id="Q9NX40-1"/>
    <property type="nucleotide sequence ID" value="XM_047415862.1"/>
</dbReference>
<dbReference type="RefSeq" id="XP_054206280.1">
    <molecule id="Q9NX40-1"/>
    <property type="nucleotide sequence ID" value="XM_054350305.1"/>
</dbReference>
<dbReference type="RefSeq" id="XP_054206281.1">
    <molecule id="Q9NX40-1"/>
    <property type="nucleotide sequence ID" value="XM_054350306.1"/>
</dbReference>
<dbReference type="RefSeq" id="XP_054206282.1">
    <molecule id="Q9NX40-1"/>
    <property type="nucleotide sequence ID" value="XM_054350307.1"/>
</dbReference>
<dbReference type="RefSeq" id="XP_054206283.1">
    <molecule id="Q9NX40-1"/>
    <property type="nucleotide sequence ID" value="XM_054350308.1"/>
</dbReference>
<dbReference type="RefSeq" id="XP_054206285.1">
    <molecule id="Q9NX40-4"/>
    <property type="nucleotide sequence ID" value="XM_054350310.1"/>
</dbReference>
<dbReference type="RefSeq" id="XP_054206286.1">
    <molecule id="Q9NX40-4"/>
    <property type="nucleotide sequence ID" value="XM_054350311.1"/>
</dbReference>
<dbReference type="BioGRID" id="120280">
    <property type="interactions" value="443"/>
</dbReference>
<dbReference type="FunCoup" id="Q9NX40">
    <property type="interactions" value="2358"/>
</dbReference>
<dbReference type="IntAct" id="Q9NX40">
    <property type="interactions" value="214"/>
</dbReference>
<dbReference type="MINT" id="Q9NX40"/>
<dbReference type="STRING" id="9606.ENSP00000370882"/>
<dbReference type="GlyGen" id="Q9NX40">
    <property type="glycosylation" value="2 sites, 1 N-linked glycan (1 site), 1 O-linked glycan (1 site)"/>
</dbReference>
<dbReference type="iPTMnet" id="Q9NX40"/>
<dbReference type="PhosphoSitePlus" id="Q9NX40"/>
<dbReference type="SwissPalm" id="Q9NX40"/>
<dbReference type="BioMuta" id="OCIAD1"/>
<dbReference type="DMDM" id="74734685"/>
<dbReference type="jPOST" id="Q9NX40"/>
<dbReference type="MassIVE" id="Q9NX40"/>
<dbReference type="PaxDb" id="9606-ENSP00000370882"/>
<dbReference type="PeptideAtlas" id="Q9NX40"/>
<dbReference type="ProteomicsDB" id="34288"/>
<dbReference type="ProteomicsDB" id="83031">
    <molecule id="Q9NX40-1"/>
</dbReference>
<dbReference type="ProteomicsDB" id="83032">
    <molecule id="Q9NX40-2"/>
</dbReference>
<dbReference type="ProteomicsDB" id="83033">
    <molecule id="Q9NX40-3"/>
</dbReference>
<dbReference type="Pumba" id="Q9NX40"/>
<dbReference type="TopDownProteomics" id="Q9NX40-1">
    <molecule id="Q9NX40-1"/>
</dbReference>
<dbReference type="TopDownProteomics" id="Q9NX40-2">
    <molecule id="Q9NX40-2"/>
</dbReference>
<dbReference type="TopDownProteomics" id="Q9NX40-3">
    <molecule id="Q9NX40-3"/>
</dbReference>
<dbReference type="Antibodypedia" id="23858">
    <property type="antibodies" value="229 antibodies from 32 providers"/>
</dbReference>
<dbReference type="DNASU" id="54940"/>
<dbReference type="Ensembl" id="ENST00000264312.12">
    <molecule id="Q9NX40-1"/>
    <property type="protein sequence ID" value="ENSP00000264312.7"/>
    <property type="gene ID" value="ENSG00000109180.15"/>
</dbReference>
<dbReference type="Ensembl" id="ENST00000381473.7">
    <molecule id="Q9NX40-1"/>
    <property type="protein sequence ID" value="ENSP00000370882.3"/>
    <property type="gene ID" value="ENSG00000109180.15"/>
</dbReference>
<dbReference type="Ensembl" id="ENST00000396448.6">
    <molecule id="Q9NX40-2"/>
    <property type="protein sequence ID" value="ENSP00000379725.2"/>
    <property type="gene ID" value="ENSG00000109180.15"/>
</dbReference>
<dbReference type="Ensembl" id="ENST00000425583.6">
    <molecule id="Q9NX40-4"/>
    <property type="protein sequence ID" value="ENSP00000416943.2"/>
    <property type="gene ID" value="ENSG00000109180.15"/>
</dbReference>
<dbReference type="Ensembl" id="ENST00000444354.6">
    <molecule id="Q9NX40-4"/>
    <property type="protein sequence ID" value="ENSP00000399656.2"/>
    <property type="gene ID" value="ENSG00000109180.15"/>
</dbReference>
<dbReference type="Ensembl" id="ENST00000508293.5">
    <molecule id="Q9NX40-1"/>
    <property type="protein sequence ID" value="ENSP00000423002.1"/>
    <property type="gene ID" value="ENSG00000109180.15"/>
</dbReference>
<dbReference type="Ensembl" id="ENST00000513391.2">
    <molecule id="Q9NX40-1"/>
    <property type="protein sequence ID" value="ENSP00000423909.2"/>
    <property type="gene ID" value="ENSG00000109180.15"/>
</dbReference>
<dbReference type="GeneID" id="54940"/>
<dbReference type="KEGG" id="hsa:54940"/>
<dbReference type="MANE-Select" id="ENST00000264312.12">
    <property type="protein sequence ID" value="ENSP00000264312.7"/>
    <property type="RefSeq nucleotide sequence ID" value="NM_017830.4"/>
    <property type="RefSeq protein sequence ID" value="NP_060300.1"/>
</dbReference>
<dbReference type="UCSC" id="uc003gyo.4">
    <molecule id="Q9NX40-1"/>
    <property type="organism name" value="human"/>
</dbReference>
<dbReference type="AGR" id="HGNC:16074"/>
<dbReference type="CTD" id="54940"/>
<dbReference type="DisGeNET" id="54940"/>
<dbReference type="GeneCards" id="OCIAD1"/>
<dbReference type="HGNC" id="HGNC:16074">
    <property type="gene designation" value="OCIAD1"/>
</dbReference>
<dbReference type="HPA" id="ENSG00000109180">
    <property type="expression patterns" value="Low tissue specificity"/>
</dbReference>
<dbReference type="MIM" id="619596">
    <property type="type" value="gene"/>
</dbReference>
<dbReference type="neXtProt" id="NX_Q9NX40"/>
<dbReference type="OpenTargets" id="ENSG00000109180"/>
<dbReference type="PharmGKB" id="PA134898158"/>
<dbReference type="VEuPathDB" id="HostDB:ENSG00000109180"/>
<dbReference type="eggNOG" id="ENOG502RXQR">
    <property type="taxonomic scope" value="Eukaryota"/>
</dbReference>
<dbReference type="GeneTree" id="ENSGT00530000063690"/>
<dbReference type="HOGENOM" id="CLU_083038_0_0_1"/>
<dbReference type="InParanoid" id="Q9NX40"/>
<dbReference type="OMA" id="TYEVMLP"/>
<dbReference type="OrthoDB" id="6513616at2759"/>
<dbReference type="PAN-GO" id="Q9NX40">
    <property type="GO annotations" value="1 GO annotation based on evolutionary models"/>
</dbReference>
<dbReference type="PhylomeDB" id="Q9NX40"/>
<dbReference type="TreeFam" id="TF327106"/>
<dbReference type="PathwayCommons" id="Q9NX40"/>
<dbReference type="SignaLink" id="Q9NX40"/>
<dbReference type="BioGRID-ORCS" id="54940">
    <property type="hits" value="39 hits in 1156 CRISPR screens"/>
</dbReference>
<dbReference type="ChiTaRS" id="OCIAD1">
    <property type="organism name" value="human"/>
</dbReference>
<dbReference type="GenomeRNAi" id="54940"/>
<dbReference type="Pharos" id="Q9NX40">
    <property type="development level" value="Tbio"/>
</dbReference>
<dbReference type="PRO" id="PR:Q9NX40"/>
<dbReference type="Proteomes" id="UP000005640">
    <property type="component" value="Chromosome 4"/>
</dbReference>
<dbReference type="RNAct" id="Q9NX40">
    <property type="molecule type" value="protein"/>
</dbReference>
<dbReference type="Bgee" id="ENSG00000109180">
    <property type="expression patterns" value="Expressed in pancreatic ductal cell and 193 other cell types or tissues"/>
</dbReference>
<dbReference type="ExpressionAtlas" id="Q9NX40">
    <property type="expression patterns" value="baseline and differential"/>
</dbReference>
<dbReference type="GO" id="GO:0005768">
    <property type="term" value="C:endosome"/>
    <property type="evidence" value="ECO:0000250"/>
    <property type="project" value="UniProtKB"/>
</dbReference>
<dbReference type="GO" id="GO:0005794">
    <property type="term" value="C:Golgi apparatus"/>
    <property type="evidence" value="ECO:0000250"/>
    <property type="project" value="FlyBase"/>
</dbReference>
<dbReference type="GO" id="GO:0005764">
    <property type="term" value="C:lysosome"/>
    <property type="evidence" value="ECO:0000250"/>
    <property type="project" value="FlyBase"/>
</dbReference>
<dbReference type="GO" id="GO:0016020">
    <property type="term" value="C:membrane"/>
    <property type="evidence" value="ECO:0007005"/>
    <property type="project" value="UniProtKB"/>
</dbReference>
<dbReference type="GO" id="GO:0005739">
    <property type="term" value="C:mitochondrion"/>
    <property type="evidence" value="ECO:0006056"/>
    <property type="project" value="FlyBase"/>
</dbReference>
<dbReference type="GO" id="GO:0006897">
    <property type="term" value="P:endocytosis"/>
    <property type="evidence" value="ECO:0000250"/>
    <property type="project" value="FlyBase"/>
</dbReference>
<dbReference type="GO" id="GO:0061484">
    <property type="term" value="P:hematopoietic stem cell homeostasis"/>
    <property type="evidence" value="ECO:0000250"/>
    <property type="project" value="FlyBase"/>
</dbReference>
<dbReference type="GO" id="GO:0046427">
    <property type="term" value="P:positive regulation of receptor signaling pathway via JAK-STAT"/>
    <property type="evidence" value="ECO:0000250"/>
    <property type="project" value="FlyBase"/>
</dbReference>
<dbReference type="GO" id="GO:2000736">
    <property type="term" value="P:regulation of stem cell differentiation"/>
    <property type="evidence" value="ECO:0000250"/>
    <property type="project" value="UniProtKB"/>
</dbReference>
<dbReference type="InterPro" id="IPR040187">
    <property type="entry name" value="OCAD1/2"/>
</dbReference>
<dbReference type="InterPro" id="IPR009764">
    <property type="entry name" value="OCIA_dom"/>
</dbReference>
<dbReference type="PANTHER" id="PTHR13336:SF4">
    <property type="entry name" value="OCIA DOMAIN-CONTAINING PROTEIN 1"/>
    <property type="match status" value="1"/>
</dbReference>
<dbReference type="PANTHER" id="PTHR13336">
    <property type="entry name" value="OVARIAN CARCINOMA IMMUNOREACTIVE ANTIGEN"/>
    <property type="match status" value="1"/>
</dbReference>
<dbReference type="Pfam" id="PF07051">
    <property type="entry name" value="OCIA"/>
    <property type="match status" value="1"/>
</dbReference>
<gene>
    <name evidence="10" type="primary">OCIAD1</name>
    <name evidence="1" type="synonym">ASRIJ</name>
    <name type="synonym">OCIA</name>
</gene>
<accession>Q9NX40</accession>
<accession>C9K030</accession>
<accession>G8JLN7</accession>
<accession>Q9BZE8</accession>
<protein>
    <recommendedName>
        <fullName>OCIA domain-containing protein 1</fullName>
    </recommendedName>
    <alternativeName>
        <fullName evidence="7">Ovarian cancer immunoreactive antigen domain containing 1</fullName>
    </alternativeName>
    <alternativeName>
        <fullName>Ovarian carcinoma immunoreactive antigen</fullName>
    </alternativeName>
</protein>
<organism>
    <name type="scientific">Homo sapiens</name>
    <name type="common">Human</name>
    <dbReference type="NCBI Taxonomy" id="9606"/>
    <lineage>
        <taxon>Eukaryota</taxon>
        <taxon>Metazoa</taxon>
        <taxon>Chordata</taxon>
        <taxon>Craniata</taxon>
        <taxon>Vertebrata</taxon>
        <taxon>Euteleostomi</taxon>
        <taxon>Mammalia</taxon>
        <taxon>Eutheria</taxon>
        <taxon>Euarchontoglires</taxon>
        <taxon>Primates</taxon>
        <taxon>Haplorrhini</taxon>
        <taxon>Catarrhini</taxon>
        <taxon>Hominidae</taxon>
        <taxon>Homo</taxon>
    </lineage>
</organism>
<evidence type="ECO:0000250" key="1">
    <source>
        <dbReference type="UniProtKB" id="Q9CRD0"/>
    </source>
</evidence>
<evidence type="ECO:0000256" key="2">
    <source>
        <dbReference type="SAM" id="MobiDB-lite"/>
    </source>
</evidence>
<evidence type="ECO:0000269" key="3">
    <source>
    </source>
</evidence>
<evidence type="ECO:0000269" key="4">
    <source>
    </source>
</evidence>
<evidence type="ECO:0000269" key="5">
    <source>
    </source>
</evidence>
<evidence type="ECO:0000303" key="6">
    <source>
    </source>
</evidence>
<evidence type="ECO:0000303" key="7">
    <source>
    </source>
</evidence>
<evidence type="ECO:0000303" key="8">
    <source ref="3"/>
</evidence>
<evidence type="ECO:0000305" key="9"/>
<evidence type="ECO:0000312" key="10">
    <source>
        <dbReference type="HGNC" id="HGNC:16074"/>
    </source>
</evidence>
<evidence type="ECO:0007744" key="11">
    <source>
    </source>
</evidence>
<evidence type="ECO:0007744" key="12">
    <source>
    </source>
</evidence>
<evidence type="ECO:0007744" key="13">
    <source>
    </source>
</evidence>
<evidence type="ECO:0007744" key="14">
    <source>
    </source>
</evidence>
<evidence type="ECO:0007744" key="15">
    <source>
    </source>
</evidence>
<evidence type="ECO:0007744" key="16">
    <source>
    </source>
</evidence>
<evidence type="ECO:0007744" key="17">
    <source>
    </source>
</evidence>
<comment type="function">
    <text evidence="1 4">Maintains stem cell potency (By similarity). Increases STAT3 phosphorylation and controls ERK phosphorylation (By similarity). May act as a scaffold, increasing STAT3 recruitment onto endosomes (By similarity). Involved in integrin-mediated cancer cell adhesion and colony formation in ovarian cancer (PubMed:20515946).</text>
</comment>
<comment type="subunit">
    <text evidence="1 5">Interacts with OCIAD2 (PubMed:29743632). Interacts with STAT3.</text>
</comment>
<comment type="interaction">
    <interactant intactId="EBI-2683029">
        <id>Q9NX40</id>
    </interactant>
    <interactant intactId="EBI-12092171">
        <id>Q12797-6</id>
        <label>ASPH</label>
    </interactant>
    <organismsDiffer>false</organismsDiffer>
    <experiments>3</experiments>
</comment>
<comment type="interaction">
    <interactant intactId="EBI-2683029">
        <id>Q9NX40</id>
    </interactant>
    <interactant intactId="EBI-765623">
        <id>P17544</id>
        <label>ATF7</label>
    </interactant>
    <organismsDiffer>false</organismsDiffer>
    <experiments>2</experiments>
</comment>
<comment type="interaction">
    <interactant intactId="EBI-2683029">
        <id>Q9NX40</id>
    </interactant>
    <interactant intactId="EBI-1748958">
        <id>P49069</id>
        <label>CAMLG</label>
    </interactant>
    <organismsDiffer>false</organismsDiffer>
    <experiments>3</experiments>
</comment>
<comment type="interaction">
    <interactant intactId="EBI-2683029">
        <id>Q9NX40</id>
    </interactant>
    <interactant intactId="EBI-3918971">
        <id>Q9Y680</id>
        <label>FKBP7</label>
    </interactant>
    <organismsDiffer>false</organismsDiffer>
    <experiments>3</experiments>
</comment>
<comment type="interaction">
    <interactant intactId="EBI-2683029">
        <id>Q9NX40</id>
    </interactant>
    <interactant intactId="EBI-713304">
        <id>Q9H0Q3</id>
        <label>FXYD6</label>
    </interactant>
    <organismsDiffer>false</organismsDiffer>
    <experiments>3</experiments>
</comment>
<comment type="interaction">
    <interactant intactId="EBI-2683029">
        <id>Q9NX40</id>
    </interactant>
    <interactant intactId="EBI-17873222">
        <id>Q15546</id>
        <label>MMD</label>
    </interactant>
    <organismsDiffer>false</organismsDiffer>
    <experiments>3</experiments>
</comment>
<comment type="interaction">
    <interactant intactId="EBI-2683029">
        <id>Q9NX40</id>
    </interactant>
    <interactant intactId="EBI-10294651">
        <id>Q99726</id>
        <label>SLC30A3</label>
    </interactant>
    <organismsDiffer>false</organismsDiffer>
    <experiments>4</experiments>
</comment>
<comment type="interaction">
    <interactant intactId="EBI-2683029">
        <id>Q9NX40</id>
    </interactant>
    <interactant intactId="EBI-11528917">
        <id>Q8WW34-2</id>
        <label>TMEM239</label>
    </interactant>
    <organismsDiffer>false</organismsDiffer>
    <experiments>3</experiments>
</comment>
<comment type="subcellular location">
    <subcellularLocation>
        <location evidence="1">Endosome</location>
    </subcellularLocation>
</comment>
<comment type="alternative products">
    <event type="alternative splicing"/>
    <isoform>
        <id>Q9NX40-1</id>
        <name>1</name>
        <name>A</name>
        <sequence type="displayed"/>
    </isoform>
    <isoform>
        <id>Q9NX40-2</id>
        <name>2</name>
        <name>B</name>
        <sequence type="described" ref="VSP_027621 VSP_027622"/>
    </isoform>
    <isoform>
        <id>Q9NX40-3</id>
        <name>3</name>
        <sequence type="described" ref="VSP_027622"/>
    </isoform>
    <isoform>
        <id>Q9NX40-4</id>
        <name>4</name>
        <sequence type="described" ref="VSP_046212"/>
    </isoform>
</comment>
<comment type="tissue specificity">
    <text evidence="3">Isoform 1 is highly expressed in many tissues, including testis, brain, placenta, ovary, prostate and mammary gland. Isoform 2 expression is restricted to the central nervous system including brain, cerebellum and spinal cord.</text>
</comment>
<comment type="domain">
    <text evidence="1">The OCIA domain is necessary and sufficient for endosomal localization.</text>
</comment>
<comment type="miscellaneous">
    <text>'Asrij' stands for 'blood' in Sanskrit as this protein is strongly expressed in blood vessels.</text>
</comment>
<comment type="similarity">
    <text evidence="9">Belongs to the OCIAD1 family.</text>
</comment>
<feature type="chain" id="PRO_0000299382" description="OCIA domain-containing protein 1">
    <location>
        <begin position="1"/>
        <end position="245"/>
    </location>
</feature>
<feature type="domain" description="OCIA">
    <location>
        <begin position="1"/>
        <end position="112"/>
    </location>
</feature>
<feature type="region of interest" description="Disordered" evidence="2">
    <location>
        <begin position="111"/>
        <end position="141"/>
    </location>
</feature>
<feature type="region of interest" description="Disordered" evidence="2">
    <location>
        <begin position="169"/>
        <end position="245"/>
    </location>
</feature>
<feature type="compositionally biased region" description="Basic and acidic residues" evidence="2">
    <location>
        <begin position="190"/>
        <end position="210"/>
    </location>
</feature>
<feature type="compositionally biased region" description="Basic and acidic residues" evidence="2">
    <location>
        <begin position="224"/>
        <end position="238"/>
    </location>
</feature>
<feature type="modified residue" description="Phosphoserine" evidence="11 12 13 14 15 16">
    <location>
        <position position="108"/>
    </location>
</feature>
<feature type="modified residue" description="Phosphoserine" evidence="16">
    <location>
        <position position="116"/>
    </location>
</feature>
<feature type="modified residue" description="Phosphoserine" evidence="15 16 17">
    <location>
        <position position="123"/>
    </location>
</feature>
<feature type="modified residue" description="Phosphoserine" evidence="11 15 17">
    <location>
        <position position="191"/>
    </location>
</feature>
<feature type="splice variant" id="VSP_046212" description="In isoform 4." evidence="8">
    <location>
        <begin position="183"/>
        <end position="233"/>
    </location>
</feature>
<feature type="splice variant" id="VSP_027621" description="In isoform 2." evidence="6">
    <original>PDPN</original>
    <variation>RNFS</variation>
    <location>
        <begin position="184"/>
        <end position="187"/>
    </location>
</feature>
<feature type="splice variant" id="VSP_027622" description="In isoform 2 and isoform 3." evidence="6">
    <location>
        <begin position="188"/>
        <end position="245"/>
    </location>
</feature>
<name>OCAD1_HUMAN</name>